<name>HAL3_CAEEL</name>
<accession>Q10006</accession>
<dbReference type="EMBL" id="BX284602">
    <property type="protein sequence ID" value="CAA87415.1"/>
    <property type="molecule type" value="Genomic_DNA"/>
</dbReference>
<dbReference type="PIR" id="T24939">
    <property type="entry name" value="T24939"/>
</dbReference>
<dbReference type="RefSeq" id="NP_496071.1">
    <property type="nucleotide sequence ID" value="NM_063670.2"/>
</dbReference>
<dbReference type="SMR" id="Q10006"/>
<dbReference type="BioGRID" id="53200">
    <property type="interactions" value="4"/>
</dbReference>
<dbReference type="FunCoup" id="Q10006">
    <property type="interactions" value="382"/>
</dbReference>
<dbReference type="IntAct" id="Q10006">
    <property type="interactions" value="1"/>
</dbReference>
<dbReference type="STRING" id="6239.T15H9.2.1"/>
<dbReference type="PaxDb" id="6239-T15H9.2"/>
<dbReference type="EnsemblMetazoa" id="T15H9.2.1">
    <property type="protein sequence ID" value="T15H9.2.1"/>
    <property type="gene ID" value="WBGene00011788"/>
</dbReference>
<dbReference type="GeneID" id="188538"/>
<dbReference type="KEGG" id="cel:CELE_T15H9.2"/>
<dbReference type="UCSC" id="T15H9.2">
    <property type="organism name" value="c. elegans"/>
</dbReference>
<dbReference type="AGR" id="WB:WBGene00011788"/>
<dbReference type="CTD" id="188538"/>
<dbReference type="WormBase" id="T15H9.2">
    <property type="protein sequence ID" value="CE01665"/>
    <property type="gene ID" value="WBGene00011788"/>
    <property type="gene designation" value="hal-3"/>
</dbReference>
<dbReference type="eggNOG" id="ENOG502TH7R">
    <property type="taxonomic scope" value="Eukaryota"/>
</dbReference>
<dbReference type="HOGENOM" id="CLU_1090816_0_0_1"/>
<dbReference type="InParanoid" id="Q10006"/>
<dbReference type="OMA" id="TEMMAND"/>
<dbReference type="OrthoDB" id="5787587at2759"/>
<dbReference type="PhylomeDB" id="Q10006"/>
<dbReference type="SignaLink" id="Q10006"/>
<dbReference type="PRO" id="PR:Q10006"/>
<dbReference type="Proteomes" id="UP000001940">
    <property type="component" value="Chromosome II"/>
</dbReference>
<dbReference type="Bgee" id="WBGene00011788">
    <property type="expression patterns" value="Expressed in adult organism and 3 other cell types or tissues"/>
</dbReference>
<keyword id="KW-0175">Coiled coil</keyword>
<keyword id="KW-1185">Reference proteome</keyword>
<organism>
    <name type="scientific">Caenorhabditis elegans</name>
    <dbReference type="NCBI Taxonomy" id="6239"/>
    <lineage>
        <taxon>Eukaryota</taxon>
        <taxon>Metazoa</taxon>
        <taxon>Ecdysozoa</taxon>
        <taxon>Nematoda</taxon>
        <taxon>Chromadorea</taxon>
        <taxon>Rhabditida</taxon>
        <taxon>Rhabditina</taxon>
        <taxon>Rhabditomorpha</taxon>
        <taxon>Rhabditoidea</taxon>
        <taxon>Rhabditidae</taxon>
        <taxon>Peloderinae</taxon>
        <taxon>Caenorhabditis</taxon>
    </lineage>
</organism>
<proteinExistence type="predicted"/>
<reference key="1">
    <citation type="journal article" date="1998" name="Science">
        <title>Genome sequence of the nematode C. elegans: a platform for investigating biology.</title>
        <authorList>
            <consortium name="The C. elegans sequencing consortium"/>
        </authorList>
    </citation>
    <scope>NUCLEOTIDE SEQUENCE [LARGE SCALE GENOMIC DNA]</scope>
    <source>
        <strain>Bristol N2</strain>
    </source>
</reference>
<feature type="chain" id="PRO_0000065461" description="Uncharacterized protein hal-3">
    <location>
        <begin position="1"/>
        <end position="252"/>
    </location>
</feature>
<feature type="coiled-coil region" evidence="1">
    <location>
        <begin position="106"/>
        <end position="140"/>
    </location>
</feature>
<gene>
    <name evidence="3" type="primary">hal-3</name>
    <name evidence="3" type="ORF">T15H9.2</name>
</gene>
<evidence type="ECO:0000255" key="1"/>
<evidence type="ECO:0000305" key="2"/>
<evidence type="ECO:0000312" key="3">
    <source>
        <dbReference type="WormBase" id="T15H9.2"/>
    </source>
</evidence>
<protein>
    <recommendedName>
        <fullName evidence="2">Uncharacterized protein hal-3</fullName>
    </recommendedName>
</protein>
<sequence>MAAAKRKLVFDSPNESSVNFETSPNFPKEWKIDGMDIENRIRNFRDELQAQGLCPVGSAGIDPKSKFRTEYRRIVNANTILTDVLRLQQKEGEWLKNASGLLEYDIQSLHARRDHLDNAVEQLKSQLSRLDSSVAILKSQQMAVKSVLELREDEYLADDADSNLPDEFLKFSKISKLCAASLQSYENVKKRNEEMQKELIAERNRQRKLHDATMKMMEEKERVRVEQLEDLFKDFSLEQLTRLRDRIRQAQK</sequence>